<dbReference type="EMBL" id="CP000468">
    <property type="protein sequence ID" value="ABJ01178.1"/>
    <property type="molecule type" value="Genomic_DNA"/>
</dbReference>
<dbReference type="RefSeq" id="WP_000156257.1">
    <property type="nucleotide sequence ID" value="NZ_CADILS010000034.1"/>
</dbReference>
<dbReference type="SMR" id="A1ABY8"/>
<dbReference type="KEGG" id="ecv:APECO1_877"/>
<dbReference type="HOGENOM" id="CLU_133645_0_0_6"/>
<dbReference type="Proteomes" id="UP000008216">
    <property type="component" value="Chromosome"/>
</dbReference>
<dbReference type="GO" id="GO:0005886">
    <property type="term" value="C:plasma membrane"/>
    <property type="evidence" value="ECO:0007669"/>
    <property type="project" value="UniProtKB-SubCell"/>
</dbReference>
<dbReference type="HAMAP" id="MF_01071">
    <property type="entry name" value="UPF0266"/>
    <property type="match status" value="1"/>
</dbReference>
<dbReference type="InterPro" id="IPR009328">
    <property type="entry name" value="DUF986"/>
</dbReference>
<dbReference type="NCBIfam" id="NF002791">
    <property type="entry name" value="PRK02913.1"/>
    <property type="match status" value="1"/>
</dbReference>
<dbReference type="Pfam" id="PF06173">
    <property type="entry name" value="DUF986"/>
    <property type="match status" value="1"/>
</dbReference>
<dbReference type="PIRSF" id="PIRSF020687">
    <property type="entry name" value="UCP020687"/>
    <property type="match status" value="1"/>
</dbReference>
<gene>
    <name evidence="1" type="primary">yobD</name>
    <name type="ordered locus">Ecok1_16840</name>
    <name type="ORF">APECO1_877</name>
</gene>
<proteinExistence type="inferred from homology"/>
<sequence length="152" mass="17601">MTITDLVLILFIAALLAFAIYDQFIMPRRNGPTLLAIPLLRRGRIDSVIFVGLIVILIYNNVTNHGALITTWLLSALALMGFYIFWIRVPKIIFKQKGFFFANVWIEYSRIKAMNLSEDGVLVMQLEQRRLLIRVRNIDDLEKVYKLLVSTQ</sequence>
<evidence type="ECO:0000255" key="1">
    <source>
        <dbReference type="HAMAP-Rule" id="MF_01071"/>
    </source>
</evidence>
<protein>
    <recommendedName>
        <fullName evidence="1">UPF0266 membrane protein YobD</fullName>
    </recommendedName>
</protein>
<comment type="subcellular location">
    <subcellularLocation>
        <location evidence="1">Cell inner membrane</location>
        <topology evidence="1">Multi-pass membrane protein</topology>
    </subcellularLocation>
</comment>
<comment type="similarity">
    <text evidence="1">Belongs to the UPF0266 family.</text>
</comment>
<organism>
    <name type="scientific">Escherichia coli O1:K1 / APEC</name>
    <dbReference type="NCBI Taxonomy" id="405955"/>
    <lineage>
        <taxon>Bacteria</taxon>
        <taxon>Pseudomonadati</taxon>
        <taxon>Pseudomonadota</taxon>
        <taxon>Gammaproteobacteria</taxon>
        <taxon>Enterobacterales</taxon>
        <taxon>Enterobacteriaceae</taxon>
        <taxon>Escherichia</taxon>
    </lineage>
</organism>
<name>YOBD_ECOK1</name>
<keyword id="KW-0997">Cell inner membrane</keyword>
<keyword id="KW-1003">Cell membrane</keyword>
<keyword id="KW-0472">Membrane</keyword>
<keyword id="KW-1185">Reference proteome</keyword>
<keyword id="KW-0812">Transmembrane</keyword>
<keyword id="KW-1133">Transmembrane helix</keyword>
<accession>A1ABY8</accession>
<feature type="chain" id="PRO_1000064581" description="UPF0266 membrane protein YobD">
    <location>
        <begin position="1"/>
        <end position="152"/>
    </location>
</feature>
<feature type="transmembrane region" description="Helical" evidence="1">
    <location>
        <begin position="6"/>
        <end position="26"/>
    </location>
</feature>
<feature type="transmembrane region" description="Helical" evidence="1">
    <location>
        <begin position="45"/>
        <end position="65"/>
    </location>
</feature>
<feature type="transmembrane region" description="Helical" evidence="1">
    <location>
        <begin position="67"/>
        <end position="87"/>
    </location>
</feature>
<reference key="1">
    <citation type="journal article" date="2007" name="J. Bacteriol.">
        <title>The genome sequence of avian pathogenic Escherichia coli strain O1:K1:H7 shares strong similarities with human extraintestinal pathogenic E. coli genomes.</title>
        <authorList>
            <person name="Johnson T.J."/>
            <person name="Kariyawasam S."/>
            <person name="Wannemuehler Y."/>
            <person name="Mangiamele P."/>
            <person name="Johnson S.J."/>
            <person name="Doetkott C."/>
            <person name="Skyberg J.A."/>
            <person name="Lynne A.M."/>
            <person name="Johnson J.R."/>
            <person name="Nolan L.K."/>
        </authorList>
    </citation>
    <scope>NUCLEOTIDE SEQUENCE [LARGE SCALE GENOMIC DNA]</scope>
</reference>